<keyword id="KW-0007">Acetylation</keyword>
<keyword id="KW-0010">Activator</keyword>
<keyword id="KW-0965">Cell junction</keyword>
<keyword id="KW-0966">Cell projection</keyword>
<keyword id="KW-0963">Cytoplasm</keyword>
<keyword id="KW-0238">DNA-binding</keyword>
<keyword id="KW-0325">Glycoprotein</keyword>
<keyword id="KW-1017">Isopeptide bond</keyword>
<keyword id="KW-0488">Methylation</keyword>
<keyword id="KW-0507">mRNA processing</keyword>
<keyword id="KW-0508">mRNA splicing</keyword>
<keyword id="KW-0539">Nucleus</keyword>
<keyword id="KW-0597">Phosphoprotein</keyword>
<keyword id="KW-1185">Reference proteome</keyword>
<keyword id="KW-0677">Repeat</keyword>
<keyword id="KW-0678">Repressor</keyword>
<keyword id="KW-0687">Ribonucleoprotein</keyword>
<keyword id="KW-0694">RNA-binding</keyword>
<keyword id="KW-0747">Spliceosome</keyword>
<keyword id="KW-0804">Transcription</keyword>
<keyword id="KW-0805">Transcription regulation</keyword>
<keyword id="KW-0832">Ubl conjugation</keyword>
<gene>
    <name type="primary">HNRNPK</name>
    <name type="synonym">HNRPK</name>
</gene>
<organism>
    <name type="scientific">Bos taurus</name>
    <name type="common">Bovine</name>
    <dbReference type="NCBI Taxonomy" id="9913"/>
    <lineage>
        <taxon>Eukaryota</taxon>
        <taxon>Metazoa</taxon>
        <taxon>Chordata</taxon>
        <taxon>Craniata</taxon>
        <taxon>Vertebrata</taxon>
        <taxon>Euteleostomi</taxon>
        <taxon>Mammalia</taxon>
        <taxon>Eutheria</taxon>
        <taxon>Laurasiatheria</taxon>
        <taxon>Artiodactyla</taxon>
        <taxon>Ruminantia</taxon>
        <taxon>Pecora</taxon>
        <taxon>Bovidae</taxon>
        <taxon>Bovinae</taxon>
        <taxon>Bos</taxon>
    </lineage>
</organism>
<name>HNRPK_BOVIN</name>
<proteinExistence type="evidence at transcript level"/>
<sequence length="464" mass="51019">METEQPEETFPNTETNGEFGKRPAEDMEEEQAFKRSRNTDEMVELRILLQSKNAGAVIGKGGKNIKALRTDYNASVSVPDSSGPERILSISADIETIGEILKKIIPTLEEGLQLPSPTATSQLPLESDAVECLNYQHYKGSDFDCELRLLIHQSLAGGIIGVKGAKIKELRENTQTTIKLFQECCPQSTDRVVLIGGKPDRVVECIKIILDLISESPIKGRAQPYDPNFYDETYDYGGFTMMFDDRRGRPVGFPMRGRGGFDRMPPGRGGRPMPPSRRDYDDMSPRRGPPPPPPGRGGRGGSRARNLPLPPPPPPRGGDLMAYDRRGRPGDRYDGMVGFSADETWDSAIDTWSPSEWQMAYEPQGGSGYDYSYAGGRGSYGDLGGPIITTQVTIPKDLAGSIIGKGGQRIKQIRHESGASIKIDEPLEGSEDRIITITGTQDQIQNAQYLLQNSVKQYADVEGF</sequence>
<reference key="1">
    <citation type="submission" date="2005-08" db="EMBL/GenBank/DDBJ databases">
        <authorList>
            <consortium name="NIH - Mammalian Gene Collection (MGC) project"/>
        </authorList>
    </citation>
    <scope>NUCLEOTIDE SEQUENCE [LARGE SCALE MRNA]</scope>
    <source>
        <strain>Crossbred X Angus</strain>
        <tissue>Ileum</tissue>
    </source>
</reference>
<feature type="chain" id="PRO_0000239836" description="Heterogeneous nuclear ribonucleoprotein K">
    <location>
        <begin position="1"/>
        <end position="464"/>
    </location>
</feature>
<feature type="domain" description="KH 1" evidence="5">
    <location>
        <begin position="42"/>
        <end position="104"/>
    </location>
</feature>
<feature type="repeat" description="1-1">
    <location>
        <begin position="54"/>
        <end position="76"/>
    </location>
</feature>
<feature type="repeat" description="3-1">
    <location>
        <begin position="59"/>
        <end position="62"/>
    </location>
</feature>
<feature type="domain" description="KH 2" evidence="5">
    <location>
        <begin position="144"/>
        <end position="209"/>
    </location>
</feature>
<feature type="repeat" description="2-1">
    <location>
        <begin position="245"/>
        <end position="250"/>
    </location>
</feature>
<feature type="repeat" description="3-2">
    <location>
        <begin position="257"/>
        <end position="260"/>
    </location>
</feature>
<feature type="repeat" description="3-3">
    <location>
        <begin position="267"/>
        <end position="270"/>
    </location>
</feature>
<feature type="repeat" description="3-4">
    <location>
        <begin position="295"/>
        <end position="298"/>
    </location>
</feature>
<feature type="repeat" description="2-2">
    <location>
        <begin position="324"/>
        <end position="329"/>
    </location>
</feature>
<feature type="domain" description="KH 3" evidence="5">
    <location>
        <begin position="387"/>
        <end position="451"/>
    </location>
</feature>
<feature type="repeat" description="1-2">
    <location>
        <begin position="399"/>
        <end position="421"/>
    </location>
</feature>
<feature type="repeat" description="3-5">
    <location>
        <begin position="404"/>
        <end position="407"/>
    </location>
</feature>
<feature type="region of interest" description="Necessary for interaction with DDX1" evidence="1">
    <location>
        <begin position="1"/>
        <end position="276"/>
    </location>
</feature>
<feature type="region of interest" description="Disordered" evidence="6">
    <location>
        <begin position="1"/>
        <end position="37"/>
    </location>
</feature>
<feature type="region of interest" description="2 X 22 AA approximate repeats">
    <location>
        <begin position="54"/>
        <end position="421"/>
    </location>
</feature>
<feature type="region of interest" description="5 X 4 AA repeats of G-X-G-G">
    <location>
        <begin position="59"/>
        <end position="407"/>
    </location>
</feature>
<feature type="region of interest" description="Interaction with ZIK1" evidence="1">
    <location>
        <begin position="209"/>
        <end position="337"/>
    </location>
</feature>
<feature type="region of interest" description="RNA-binding RGG-box">
    <location>
        <begin position="236"/>
        <end position="273"/>
    </location>
</feature>
<feature type="region of interest" description="2 X 6 AA approximate repeats">
    <location>
        <begin position="245"/>
        <end position="329"/>
    </location>
</feature>
<feature type="region of interest" description="Disordered" evidence="6">
    <location>
        <begin position="250"/>
        <end position="329"/>
    </location>
</feature>
<feature type="compositionally biased region" description="Basic and acidic residues" evidence="6">
    <location>
        <begin position="19"/>
        <end position="37"/>
    </location>
</feature>
<feature type="compositionally biased region" description="Low complexity" evidence="6">
    <location>
        <begin position="252"/>
        <end position="266"/>
    </location>
</feature>
<feature type="compositionally biased region" description="Basic and acidic residues" evidence="6">
    <location>
        <begin position="276"/>
        <end position="285"/>
    </location>
</feature>
<feature type="modified residue" description="N-acetylmethionine" evidence="2">
    <location>
        <position position="1"/>
    </location>
</feature>
<feature type="modified residue" description="N6-acetyllysine; alternate" evidence="3">
    <location>
        <position position="34"/>
    </location>
</feature>
<feature type="modified residue" description="Phosphoserine" evidence="2">
    <location>
        <position position="36"/>
    </location>
</feature>
<feature type="modified residue" description="Phosphothreonine" evidence="3">
    <location>
        <position position="39"/>
    </location>
</feature>
<feature type="modified residue" description="Phosphoserine" evidence="2">
    <location>
        <position position="75"/>
    </location>
</feature>
<feature type="modified residue" description="Phosphoserine" evidence="2">
    <location>
        <position position="116"/>
    </location>
</feature>
<feature type="modified residue" description="N6-acetyllysine" evidence="3">
    <location>
        <position position="198"/>
    </location>
</feature>
<feature type="modified residue" description="Phosphoserine" evidence="2">
    <location>
        <position position="214"/>
    </location>
</feature>
<feature type="modified residue" description="Phosphoserine" evidence="2">
    <location>
        <position position="216"/>
    </location>
</feature>
<feature type="modified residue" description="N6-succinyllysine; alternate" evidence="3">
    <location>
        <position position="219"/>
    </location>
</feature>
<feature type="modified residue" description="Phosphoserine" evidence="2">
    <location>
        <position position="284"/>
    </location>
</feature>
<feature type="modified residue" description="Omega-N-methylarginine" evidence="2">
    <location>
        <position position="316"/>
    </location>
</feature>
<feature type="modified residue" description="Omega-N-methylarginine" evidence="3">
    <location>
        <position position="377"/>
    </location>
</feature>
<feature type="modified residue" description="Phosphoserine" evidence="2">
    <location>
        <position position="379"/>
    </location>
</feature>
<feature type="modified residue" description="Phosphotyrosine" evidence="2">
    <location>
        <position position="380"/>
    </location>
</feature>
<feature type="modified residue" description="N6-acetyllysine; alternate" evidence="3">
    <location>
        <position position="405"/>
    </location>
</feature>
<feature type="modified residue" description="Phosphoserine" evidence="2">
    <location>
        <position position="420"/>
    </location>
</feature>
<feature type="cross-link" description="Glycyl lysine isopeptide (Lys-Gly) (interchain with G-Cter in SUMO1); alternate" evidence="2">
    <location>
        <position position="34"/>
    </location>
</feature>
<feature type="cross-link" description="Glycyl lysine isopeptide (Lys-Gly) (interchain with G-Cter in SUMO2); alternate" evidence="2">
    <location>
        <position position="34"/>
    </location>
</feature>
<feature type="cross-link" description="Glycyl lysine isopeptide (Lys-Gly) (interchain with G-Cter in SUMO2)" evidence="2">
    <location>
        <position position="52"/>
    </location>
</feature>
<feature type="cross-link" description="Glycyl lysine isopeptide (Lys-Gly) (interchain with G-Cter in SUMO2)" evidence="2">
    <location>
        <position position="60"/>
    </location>
</feature>
<feature type="cross-link" description="Glycyl lysine isopeptide (Lys-Gly) (interchain with G-Cter in SUMO1); alternate" evidence="2">
    <location>
        <position position="163"/>
    </location>
</feature>
<feature type="cross-link" description="Glycyl lysine isopeptide (Lys-Gly) (interchain with G-Cter in SUMO2); alternate" evidence="2">
    <location>
        <position position="163"/>
    </location>
</feature>
<feature type="cross-link" description="Glycyl lysine isopeptide (Lys-Gly) (interchain with G-Cter in SUMO2); alternate" evidence="2">
    <location>
        <position position="219"/>
    </location>
</feature>
<feature type="cross-link" description="Glycyl lysine isopeptide (Lys-Gly) (interchain with G-Cter in SUMO2); alternate" evidence="2">
    <location>
        <position position="405"/>
    </location>
</feature>
<feature type="cross-link" description="Glycyl lysine isopeptide (Lys-Gly) (interchain with G-Cter in SUMO); alternate" evidence="1">
    <location>
        <position position="422"/>
    </location>
</feature>
<feature type="cross-link" description="Glycyl lysine isopeptide (Lys-Gly) (interchain with G-Cter in SUMO1); alternate" evidence="2">
    <location>
        <position position="422"/>
    </location>
</feature>
<feature type="cross-link" description="Glycyl lysine isopeptide (Lys-Gly) (interchain with G-Cter in SUMO2); alternate" evidence="2">
    <location>
        <position position="422"/>
    </location>
</feature>
<protein>
    <recommendedName>
        <fullName>Heterogeneous nuclear ribonucleoprotein K</fullName>
        <shortName>hnRNP K</shortName>
    </recommendedName>
</protein>
<accession>Q3T0D0</accession>
<comment type="function">
    <text evidence="1 2">One of the major pre-mRNA-binding proteins. Binds tenaciously to poly(C) sequences. Likely to play a role in the nuclear metabolism of hnRNAs, particularly for pre-mRNAs that contain cytidine-rich sequences. Can also bind poly(C) single-stranded DNA. Plays an important role in p53/TP53 response to DNA damage, acting at the level of both transcription activation and repression. When sumoylated, acts as a transcriptional coactivator of p53/TP53, playing a role in p21/CDKN1A and 14-3-3 sigma/SFN induction. As far as transcription repression is concerned, acts by interacting with long intergenic RNA p21 (lincRNA-p21), a non-coding RNA induced by p53/TP53. This interaction is necessary for the induction of apoptosis, but not cell cycle arrest (By similarity). As part of a ribonucleoprotein complex composed at least of ZNF827, HNRNPL and the circular RNA circZNF827 that nucleates the complex on chromatin, may negatively regulate the transcription of genes involved in neuronal differentiation (By similarity).</text>
</comment>
<comment type="subunit">
    <text evidence="2 3 4">Identified in the spliceosome C complex. Interacts with ANKRD28, RBM42 and ZIK1. Interacts with DDX1. Interacts with MDM2; this interaction leads to ubiquitination and proteasomal degradation. Interacts with p53/TP53. Interacts with BRDT (By similarity). Interacts with IVNS1ABP (By similarity). Interacts with PPIA/CYPA (By similarity). Part of a transcription inhibitory ribonucleoprotein complex composed at least of the circular RNA circZNF827, ZNF827 and HNRNPL (By similarity).</text>
</comment>
<comment type="subcellular location">
    <subcellularLocation>
        <location evidence="2">Cytoplasm</location>
    </subcellularLocation>
    <subcellularLocation>
        <location evidence="2">Nucleus</location>
        <location evidence="2">Nucleoplasm</location>
    </subcellularLocation>
    <subcellularLocation>
        <location evidence="2">Cell projection</location>
        <location evidence="2">Podosome</location>
    </subcellularLocation>
</comment>
<comment type="PTM">
    <text evidence="1">Sumoylated by CBX4. Sumoylation is increased upon DNA damage, such as that produced by doxorubicin, etoposide, UV light and camptothecin, due to enhanced CBX4 phosphorylation by HIPK2 under these conditions (By similarity).</text>
</comment>
<comment type="PTM">
    <text evidence="1">Ubiquitinated by MDM2. Doxorubicin treatment does not affect monoubiquitination, but slightly decreases HNRNPK poly-ubiquitination (By similarity).</text>
</comment>
<comment type="PTM">
    <text evidence="1">O-glycosylated (O-GlcNAcylated), in a cell cycle-dependent manner.</text>
</comment>
<evidence type="ECO:0000250" key="1"/>
<evidence type="ECO:0000250" key="2">
    <source>
        <dbReference type="UniProtKB" id="P61978"/>
    </source>
</evidence>
<evidence type="ECO:0000250" key="3">
    <source>
        <dbReference type="UniProtKB" id="P61979"/>
    </source>
</evidence>
<evidence type="ECO:0000250" key="4">
    <source>
        <dbReference type="UniProtKB" id="P61980"/>
    </source>
</evidence>
<evidence type="ECO:0000255" key="5">
    <source>
        <dbReference type="PROSITE-ProRule" id="PRU00117"/>
    </source>
</evidence>
<evidence type="ECO:0000256" key="6">
    <source>
        <dbReference type="SAM" id="MobiDB-lite"/>
    </source>
</evidence>
<dbReference type="EMBL" id="BC102450">
    <property type="protein sequence ID" value="AAI02451.1"/>
    <property type="molecule type" value="mRNA"/>
</dbReference>
<dbReference type="RefSeq" id="NP_001029734.1">
    <property type="nucleotide sequence ID" value="NM_001034562.1"/>
</dbReference>
<dbReference type="RefSeq" id="XP_005210386.1">
    <property type="nucleotide sequence ID" value="XM_005210329.5"/>
</dbReference>
<dbReference type="RefSeq" id="XP_005210387.1">
    <property type="nucleotide sequence ID" value="XM_005210330.4"/>
</dbReference>
<dbReference type="RefSeq" id="XP_005210388.1">
    <property type="nucleotide sequence ID" value="XM_005210331.5"/>
</dbReference>
<dbReference type="RefSeq" id="XP_059745102.1">
    <property type="nucleotide sequence ID" value="XM_059889119.1"/>
</dbReference>
<dbReference type="SMR" id="Q3T0D0"/>
<dbReference type="FunCoup" id="Q3T0D0">
    <property type="interactions" value="4701"/>
</dbReference>
<dbReference type="STRING" id="9913.ENSBTAP00000028162"/>
<dbReference type="iPTMnet" id="Q3T0D0"/>
<dbReference type="PaxDb" id="9913-ENSBTAP00000028162"/>
<dbReference type="PeptideAtlas" id="Q3T0D0"/>
<dbReference type="GeneID" id="528135"/>
<dbReference type="KEGG" id="bta:528135"/>
<dbReference type="CTD" id="3190"/>
<dbReference type="VEuPathDB" id="HostDB:ENSBTAG00000021131"/>
<dbReference type="eggNOG" id="KOG2192">
    <property type="taxonomic scope" value="Eukaryota"/>
</dbReference>
<dbReference type="HOGENOM" id="CLU_022670_5_1_1"/>
<dbReference type="InParanoid" id="Q3T0D0"/>
<dbReference type="OMA" id="KALRTDX"/>
<dbReference type="OrthoDB" id="9714896at2759"/>
<dbReference type="TreeFam" id="TF316335"/>
<dbReference type="Reactome" id="R-BTA-4570464">
    <property type="pathway name" value="SUMOylation of RNA binding proteins"/>
</dbReference>
<dbReference type="Reactome" id="R-BTA-72163">
    <property type="pathway name" value="mRNA Splicing - Major Pathway"/>
</dbReference>
<dbReference type="Reactome" id="R-BTA-72203">
    <property type="pathway name" value="Processing of Capped Intron-Containing Pre-mRNA"/>
</dbReference>
<dbReference type="CD-CODE" id="D7FE2080">
    <property type="entry name" value="Nucleolus"/>
</dbReference>
<dbReference type="Proteomes" id="UP000009136">
    <property type="component" value="Chromosome 8"/>
</dbReference>
<dbReference type="Bgee" id="ENSBTAG00000021131">
    <property type="expression patterns" value="Expressed in spermatocyte and 105 other cell types or tissues"/>
</dbReference>
<dbReference type="GO" id="GO:0070161">
    <property type="term" value="C:anchoring junction"/>
    <property type="evidence" value="ECO:0007669"/>
    <property type="project" value="UniProtKB-KW"/>
</dbReference>
<dbReference type="GO" id="GO:0042995">
    <property type="term" value="C:cell projection"/>
    <property type="evidence" value="ECO:0007669"/>
    <property type="project" value="UniProtKB-KW"/>
</dbReference>
<dbReference type="GO" id="GO:0000785">
    <property type="term" value="C:chromatin"/>
    <property type="evidence" value="ECO:0000250"/>
    <property type="project" value="UniProtKB"/>
</dbReference>
<dbReference type="GO" id="GO:0005737">
    <property type="term" value="C:cytoplasm"/>
    <property type="evidence" value="ECO:0000250"/>
    <property type="project" value="UniProtKB"/>
</dbReference>
<dbReference type="GO" id="GO:0005654">
    <property type="term" value="C:nucleoplasm"/>
    <property type="evidence" value="ECO:0007669"/>
    <property type="project" value="UniProtKB-SubCell"/>
</dbReference>
<dbReference type="GO" id="GO:0005634">
    <property type="term" value="C:nucleus"/>
    <property type="evidence" value="ECO:0000250"/>
    <property type="project" value="UniProtKB"/>
</dbReference>
<dbReference type="GO" id="GO:0002102">
    <property type="term" value="C:podosome"/>
    <property type="evidence" value="ECO:0007669"/>
    <property type="project" value="UniProtKB-SubCell"/>
</dbReference>
<dbReference type="GO" id="GO:1990904">
    <property type="term" value="C:ribonucleoprotein complex"/>
    <property type="evidence" value="ECO:0000250"/>
    <property type="project" value="UniProtKB"/>
</dbReference>
<dbReference type="GO" id="GO:0005681">
    <property type="term" value="C:spliceosomal complex"/>
    <property type="evidence" value="ECO:0007669"/>
    <property type="project" value="UniProtKB-KW"/>
</dbReference>
<dbReference type="GO" id="GO:0003677">
    <property type="term" value="F:DNA binding"/>
    <property type="evidence" value="ECO:0007669"/>
    <property type="project" value="UniProtKB-KW"/>
</dbReference>
<dbReference type="GO" id="GO:0003729">
    <property type="term" value="F:mRNA binding"/>
    <property type="evidence" value="ECO:0000318"/>
    <property type="project" value="GO_Central"/>
</dbReference>
<dbReference type="GO" id="GO:0006397">
    <property type="term" value="P:mRNA processing"/>
    <property type="evidence" value="ECO:0007669"/>
    <property type="project" value="UniProtKB-KW"/>
</dbReference>
<dbReference type="GO" id="GO:0045892">
    <property type="term" value="P:negative regulation of DNA-templated transcription"/>
    <property type="evidence" value="ECO:0000250"/>
    <property type="project" value="UniProtKB"/>
</dbReference>
<dbReference type="GO" id="GO:0048024">
    <property type="term" value="P:regulation of mRNA splicing, via spliceosome"/>
    <property type="evidence" value="ECO:0000318"/>
    <property type="project" value="GO_Central"/>
</dbReference>
<dbReference type="GO" id="GO:0006357">
    <property type="term" value="P:regulation of transcription by RNA polymerase II"/>
    <property type="evidence" value="ECO:0000318"/>
    <property type="project" value="GO_Central"/>
</dbReference>
<dbReference type="GO" id="GO:0008380">
    <property type="term" value="P:RNA splicing"/>
    <property type="evidence" value="ECO:0007669"/>
    <property type="project" value="UniProtKB-KW"/>
</dbReference>
<dbReference type="CDD" id="cd22432">
    <property type="entry name" value="KH-I_HNRNPK_rpt1"/>
    <property type="match status" value="1"/>
</dbReference>
<dbReference type="CDD" id="cd22433">
    <property type="entry name" value="KH-I_HNRNPK_rpt2"/>
    <property type="match status" value="1"/>
</dbReference>
<dbReference type="CDD" id="cd22434">
    <property type="entry name" value="KH-I_HNRNPK_rpt3"/>
    <property type="match status" value="1"/>
</dbReference>
<dbReference type="FunFam" id="3.30.1370.10:FF:000021">
    <property type="entry name" value="Heterogeneous nuclear ribonucleoprotein K, like"/>
    <property type="match status" value="1"/>
</dbReference>
<dbReference type="FunFam" id="3.30.1370.10:FF:000023">
    <property type="entry name" value="Heterogeneous nuclear ribonucleoprotein K, like"/>
    <property type="match status" value="1"/>
</dbReference>
<dbReference type="FunFam" id="3.30.1370.10:FF:000025">
    <property type="entry name" value="Heterogeneous nuclear ribonucleoprotein K, like"/>
    <property type="match status" value="1"/>
</dbReference>
<dbReference type="Gene3D" id="3.30.1370.10">
    <property type="entry name" value="K Homology domain, type 1"/>
    <property type="match status" value="3"/>
</dbReference>
<dbReference type="InterPro" id="IPR004087">
    <property type="entry name" value="KH_dom"/>
</dbReference>
<dbReference type="InterPro" id="IPR004088">
    <property type="entry name" value="KH_dom_type_1"/>
</dbReference>
<dbReference type="InterPro" id="IPR036612">
    <property type="entry name" value="KH_dom_type_1_sf"/>
</dbReference>
<dbReference type="InterPro" id="IPR012987">
    <property type="entry name" value="ROK_N"/>
</dbReference>
<dbReference type="PANTHER" id="PTHR10288">
    <property type="entry name" value="KH DOMAIN CONTAINING RNA BINDING PROTEIN"/>
    <property type="match status" value="1"/>
</dbReference>
<dbReference type="Pfam" id="PF00013">
    <property type="entry name" value="KH_1"/>
    <property type="match status" value="3"/>
</dbReference>
<dbReference type="Pfam" id="PF08067">
    <property type="entry name" value="ROKNT"/>
    <property type="match status" value="1"/>
</dbReference>
<dbReference type="SMART" id="SM00322">
    <property type="entry name" value="KH"/>
    <property type="match status" value="3"/>
</dbReference>
<dbReference type="SUPFAM" id="SSF54791">
    <property type="entry name" value="Eukaryotic type KH-domain (KH-domain type I)"/>
    <property type="match status" value="3"/>
</dbReference>
<dbReference type="PROSITE" id="PS50084">
    <property type="entry name" value="KH_TYPE_1"/>
    <property type="match status" value="3"/>
</dbReference>